<comment type="function">
    <text evidence="2 3">Polymerizes D(-)-3-hydroxybutyryl-CoA to create polyhydroxybutyrate (PHB) which consists of thousands of hydroxybutyrate molecules linked end to end (PubMed:7957260). This subunit has no catalytic activity but enhances the activity of PhaC, the catalytic subunit, 100-fold (PubMed:9888824).</text>
</comment>
<comment type="biophysicochemical properties">
    <kinetics>
        <KM evidence="2">0.063 mM for D(-)-3-hydroxybutyryl-CoA</KM>
        <text evidence="2">Measured with the heterodimeric enzyme (PubMed:7957260). There are at least 2 substrate binding sites which display positive cooperativity (PubMed:7957260).</text>
    </kinetics>
    <phDependence>
        <text evidence="2">Optimum pH is 7.8.</text>
    </phDependence>
</comment>
<comment type="pathway">
    <text>Biopolymer metabolism; poly-(R)-3-hydroxybutanoate biosynthesis.</text>
</comment>
<comment type="subunit">
    <text evidence="2 3">A large complex of PhaC and PhaE; the ratio of the subunits has been estimated to be from 1:1 to 4:1, with more PhaE than PhaC (PubMed:7957260, PubMed:9888824).</text>
</comment>
<comment type="subcellular location">
    <subcellularLocation>
        <location evidence="6">Cytoplasm</location>
    </subcellularLocation>
    <text evidence="2">Associates with poly(3-hydroxybutyric acid) granules (PHB) when grown under 'storage' conditions.</text>
</comment>
<comment type="miscellaneous">
    <text evidence="6">Poly(3-hydroxyalkanoic acids) (PHA), of which PHB is among the most common compounds, has potential uses as a renewable, biodegradable thermoplastic. PHB serves as an intracellular energy reserve material when cells grow under conditions of nutrient limitation.</text>
</comment>
<comment type="similarity">
    <text evidence="6">Belongs to the PHA/PHB synthase family. Type III PhaE subfamily.</text>
</comment>
<organism>
    <name type="scientific">Allochromatium vinosum (strain ATCC 17899 / DSM 180 / NBRC 103801 / NCIMB 10441 / D)</name>
    <name type="common">Chromatium vinosum</name>
    <dbReference type="NCBI Taxonomy" id="572477"/>
    <lineage>
        <taxon>Bacteria</taxon>
        <taxon>Pseudomonadati</taxon>
        <taxon>Pseudomonadota</taxon>
        <taxon>Gammaproteobacteria</taxon>
        <taxon>Chromatiales</taxon>
        <taxon>Chromatiaceae</taxon>
        <taxon>Allochromatium</taxon>
    </lineage>
</organism>
<protein>
    <recommendedName>
        <fullName>Poly(3-hydroxyalkanoate) polymerase subunit PhaE</fullName>
        <shortName>PHA polymerase</shortName>
    </recommendedName>
    <alternativeName>
        <fullName evidence="4">ORF2</fullName>
    </alternativeName>
    <alternativeName>
        <fullName>PHB synthase subunit PhaE</fullName>
    </alternativeName>
    <alternativeName>
        <fullName evidence="5">Poly(hydroxyalkanoic acid) synthase subunit PhaE</fullName>
        <shortName evidence="5">PHA synthase</shortName>
        <shortName evidence="5">Polyhydroxyalkanoic acid synthase</shortName>
    </alternativeName>
    <alternativeName>
        <fullName evidence="5">Poly-beta-hydroxybutyrate polymerase subunit PhaE</fullName>
        <shortName>PHB polymerase</shortName>
        <shortName>Poly(3-hydroxybutyrate) polymerase</shortName>
    </alternativeName>
</protein>
<gene>
    <name evidence="5" type="primary">phaE</name>
    <name type="ordered locus">Alvin_0062</name>
</gene>
<keyword id="KW-0963">Cytoplasm</keyword>
<keyword id="KW-0583">PHB biosynthesis</keyword>
<keyword id="KW-1185">Reference proteome</keyword>
<dbReference type="EMBL" id="L01112">
    <property type="protein sequence ID" value="AAA23321.1"/>
    <property type="molecule type" value="Genomic_DNA"/>
</dbReference>
<dbReference type="EMBL" id="CP001896">
    <property type="protein sequence ID" value="ADC61034.1"/>
    <property type="molecule type" value="Genomic_DNA"/>
</dbReference>
<dbReference type="RefSeq" id="WP_012969310.1">
    <property type="nucleotide sequence ID" value="NC_013851.1"/>
</dbReference>
<dbReference type="STRING" id="572477.Alvin_0062"/>
<dbReference type="KEGG" id="alv:Alvin_0062"/>
<dbReference type="eggNOG" id="ENOG502Z9Y0">
    <property type="taxonomic scope" value="Bacteria"/>
</dbReference>
<dbReference type="HOGENOM" id="CLU_056549_0_0_6"/>
<dbReference type="OrthoDB" id="6115526at2"/>
<dbReference type="UniPathway" id="UPA00917"/>
<dbReference type="Proteomes" id="UP000001441">
    <property type="component" value="Chromosome"/>
</dbReference>
<dbReference type="GO" id="GO:0070088">
    <property type="term" value="C:polyhydroxyalkanoate granule"/>
    <property type="evidence" value="ECO:0000314"/>
    <property type="project" value="UniProtKB"/>
</dbReference>
<dbReference type="GO" id="GO:0042619">
    <property type="term" value="P:poly-hydroxybutyrate biosynthetic process"/>
    <property type="evidence" value="ECO:0000314"/>
    <property type="project" value="UniProtKB"/>
</dbReference>
<dbReference type="InterPro" id="IPR010123">
    <property type="entry name" value="PHA_synth_III_E"/>
</dbReference>
<dbReference type="NCBIfam" id="TIGR01834">
    <property type="entry name" value="PHA_synth_III_E"/>
    <property type="match status" value="1"/>
</dbReference>
<dbReference type="Pfam" id="PF09712">
    <property type="entry name" value="PHA_synth_III_E"/>
    <property type="match status" value="1"/>
</dbReference>
<reference key="1">
    <citation type="journal article" date="1992" name="Eur. J. Biochem.">
        <title>Cloning and nucleotide sequences of genes relevant for biosynthesis of poly(3-hydroxybutyric acid) in Chromatium vinosum strain D.</title>
        <authorList>
            <person name="Liebergesell M."/>
            <person name="Steinbuechel A."/>
        </authorList>
    </citation>
    <scope>NUCLEOTIDE SEQUENCE [GENOMIC DNA]</scope>
    <source>
        <strain>ATCC 17899 / DSM 180 / NBRC 103801 / NCIMB 10441 / D</strain>
    </source>
</reference>
<reference key="2">
    <citation type="journal article" date="2011" name="Stand. Genomic Sci.">
        <title>Complete genome sequence of Allochromatium vinosum DSM 180(T).</title>
        <authorList>
            <person name="Weissgerber T."/>
            <person name="Zigann R."/>
            <person name="Bruce D."/>
            <person name="Chang Y.J."/>
            <person name="Detter J.C."/>
            <person name="Han C."/>
            <person name="Hauser L."/>
            <person name="Jeffries C.D."/>
            <person name="Land M."/>
            <person name="Munk A.C."/>
            <person name="Tapia R."/>
            <person name="Dahl C."/>
        </authorList>
    </citation>
    <scope>NUCLEOTIDE SEQUENCE [LARGE SCALE GENOMIC DNA]</scope>
    <source>
        <strain>ATCC 17899 / DSM 180 / NBRC 103801 / NCIMB 10441 / D</strain>
    </source>
</reference>
<reference key="3">
    <citation type="journal article" date="1992" name="FEMS Microbiol. Rev.">
        <title>Molecular basis for biosynthesis and accumulation of polyhydroxyalkanoic acids in bacteria.</title>
        <authorList>
            <person name="Steinbuechel A."/>
            <person name="Hustede E."/>
            <person name="Liebergesell M."/>
            <person name="Pieper U."/>
            <person name="Timm A."/>
            <person name="Valentin H."/>
        </authorList>
    </citation>
    <scope>GENE NAME</scope>
</reference>
<reference key="4">
    <citation type="journal article" date="1994" name="Eur. J. Biochem.">
        <title>Purification and characterization of the poly(hydroxyalkanoic acid) synthase from Chromatium vinosum and localization of the enzyme at the surface of poly(hydroxyalkanoic acid) granules.</title>
        <authorList>
            <person name="Liebergesell M."/>
            <person name="Sonomoto K."/>
            <person name="Madkour M."/>
            <person name="Mayer F."/>
            <person name="Steinbuechel A."/>
        </authorList>
    </citation>
    <scope>FUNCTION</scope>
    <scope>CATALYTIC ACTIVITY</scope>
    <scope>BIOPHYSICOCHEMICAL PROPERTIES</scope>
    <scope>SUBUNIT</scope>
    <scope>SUBCELLULAR LOCATION</scope>
    <source>
        <strain>ATCC 17899 / DSM 180 / NBRC 103801 / NCIMB 10441 / D</strain>
    </source>
</reference>
<reference key="5">
    <citation type="journal article" date="1999" name="Biochemistry">
        <title>PHA synthase from Chromatium vinosum: cysteine 149 is involved in covalent catalysis.</title>
        <authorList>
            <person name="Mueh U."/>
            <person name="Sinskey A.J."/>
            <person name="Kirby D.P."/>
            <person name="Lane W.S."/>
            <person name="Stubbe J."/>
        </authorList>
    </citation>
    <scope>FUNCTION</scope>
    <scope>SUBUNIT</scope>
</reference>
<sequence>MSNTNFFNDDWLELQRKYWDNWTDMSRKAMGLDSASSSATTPWEAAIDQWWKAMAPAAPDLSRSFMEKMMEQGKNFFRLADTFAKRADEGNAGNGLELWTKTLEDMQKRFSGSLDDGGNTMQRLMSFWELPLDNWQRMMSSMSPMPGDMLRNMPHEQFKDSLDRALSAPGLGYTREEQSQYQELMRSAMEYQAALQEYTNVYTKLGMKSVEHMGSYIQGVIDSGKTIDSARALYDNWVACCEGAYADEVATPEYARIHGRLVNAQMALKKRMSILVDENLGALNMPTRSELRTLQDRLQETRRENKALRHSLHSLERRVAALAGEEPATKPATALRSPAPAAKAPARRRTTKTNPAD</sequence>
<feature type="chain" id="PRO_0000066400" description="Poly(3-hydroxyalkanoate) polymerase subunit PhaE">
    <location>
        <begin position="1"/>
        <end position="357"/>
    </location>
</feature>
<feature type="region of interest" description="Disordered" evidence="1">
    <location>
        <begin position="320"/>
        <end position="357"/>
    </location>
</feature>
<feature type="compositionally biased region" description="Low complexity" evidence="1">
    <location>
        <begin position="331"/>
        <end position="344"/>
    </location>
</feature>
<feature type="sequence conflict" description="In Ref. 1; AAA23321." evidence="6" ref="1">
    <original>T</original>
    <variation>N</variation>
    <location>
        <position position="40"/>
    </location>
</feature>
<feature type="sequence conflict" description="In Ref. 1; AAA23321." evidence="6" ref="1">
    <original>HS</original>
    <variation>RD</variation>
    <location>
        <begin position="313"/>
        <end position="314"/>
    </location>
</feature>
<proteinExistence type="evidence at protein level"/>
<name>PHAE_ALLVD</name>
<evidence type="ECO:0000256" key="1">
    <source>
        <dbReference type="SAM" id="MobiDB-lite"/>
    </source>
</evidence>
<evidence type="ECO:0000269" key="2">
    <source>
    </source>
</evidence>
<evidence type="ECO:0000269" key="3">
    <source>
    </source>
</evidence>
<evidence type="ECO:0000303" key="4">
    <source>
    </source>
</evidence>
<evidence type="ECO:0000303" key="5">
    <source>
    </source>
</evidence>
<evidence type="ECO:0000305" key="6"/>
<accession>P45372</accession>
<accession>D3RUY5</accession>